<reference key="1">
    <citation type="journal article" date="2011" name="Stand. Genomic Sci.">
        <title>Complete genome sequence of the filamentous gliding predatory bacterium Herpetosiphon aurantiacus type strain (114-95(T)).</title>
        <authorList>
            <person name="Kiss H."/>
            <person name="Nett M."/>
            <person name="Domin N."/>
            <person name="Martin K."/>
            <person name="Maresca J.A."/>
            <person name="Copeland A."/>
            <person name="Lapidus A."/>
            <person name="Lucas S."/>
            <person name="Berry K.W."/>
            <person name="Glavina Del Rio T."/>
            <person name="Dalin E."/>
            <person name="Tice H."/>
            <person name="Pitluck S."/>
            <person name="Richardson P."/>
            <person name="Bruce D."/>
            <person name="Goodwin L."/>
            <person name="Han C."/>
            <person name="Detter J.C."/>
            <person name="Schmutz J."/>
            <person name="Brettin T."/>
            <person name="Land M."/>
            <person name="Hauser L."/>
            <person name="Kyrpides N.C."/>
            <person name="Ivanova N."/>
            <person name="Goeker M."/>
            <person name="Woyke T."/>
            <person name="Klenk H.P."/>
            <person name="Bryant D.A."/>
        </authorList>
    </citation>
    <scope>NUCLEOTIDE SEQUENCE [LARGE SCALE GENOMIC DNA]</scope>
    <source>
        <strain>ATCC 23779 / DSM 785 / 114-95</strain>
    </source>
</reference>
<evidence type="ECO:0000255" key="1">
    <source>
        <dbReference type="HAMAP-Rule" id="MF_00518"/>
    </source>
</evidence>
<sequence>MRAIIQRVANASVTVAEQIVGQIETGLLVLLAVSPSDTSDDLQKLADKILNLRIFPDAHDRFDRSLIDCQGQLLVVSQFTLYADTRKGRRPSFTGAAAPALAEPMVDQFIAYCRGQGITTASGQFGAAMQVQLINDGPVTIILDTAEWQHGRG</sequence>
<gene>
    <name evidence="1" type="primary">dtd</name>
    <name type="ordered locus">Haur_0186</name>
</gene>
<feature type="chain" id="PRO_1000127543" description="D-aminoacyl-tRNA deacylase">
    <location>
        <begin position="1"/>
        <end position="153"/>
    </location>
</feature>
<feature type="short sequence motif" description="Gly-cisPro motif, important for rejection of L-amino acids" evidence="1">
    <location>
        <begin position="137"/>
        <end position="138"/>
    </location>
</feature>
<comment type="function">
    <text evidence="1">An aminoacyl-tRNA editing enzyme that deacylates mischarged D-aminoacyl-tRNAs. Also deacylates mischarged glycyl-tRNA(Ala), protecting cells against glycine mischarging by AlaRS. Acts via tRNA-based rather than protein-based catalysis; rejects L-amino acids rather than detecting D-amino acids in the active site. By recycling D-aminoacyl-tRNA to D-amino acids and free tRNA molecules, this enzyme counteracts the toxicity associated with the formation of D-aminoacyl-tRNA entities in vivo and helps enforce protein L-homochirality.</text>
</comment>
<comment type="catalytic activity">
    <reaction evidence="1">
        <text>glycyl-tRNA(Ala) + H2O = tRNA(Ala) + glycine + H(+)</text>
        <dbReference type="Rhea" id="RHEA:53744"/>
        <dbReference type="Rhea" id="RHEA-COMP:9657"/>
        <dbReference type="Rhea" id="RHEA-COMP:13640"/>
        <dbReference type="ChEBI" id="CHEBI:15377"/>
        <dbReference type="ChEBI" id="CHEBI:15378"/>
        <dbReference type="ChEBI" id="CHEBI:57305"/>
        <dbReference type="ChEBI" id="CHEBI:78442"/>
        <dbReference type="ChEBI" id="CHEBI:78522"/>
        <dbReference type="EC" id="3.1.1.96"/>
    </reaction>
</comment>
<comment type="catalytic activity">
    <reaction evidence="1">
        <text>a D-aminoacyl-tRNA + H2O = a tRNA + a D-alpha-amino acid + H(+)</text>
        <dbReference type="Rhea" id="RHEA:13953"/>
        <dbReference type="Rhea" id="RHEA-COMP:10123"/>
        <dbReference type="Rhea" id="RHEA-COMP:10124"/>
        <dbReference type="ChEBI" id="CHEBI:15377"/>
        <dbReference type="ChEBI" id="CHEBI:15378"/>
        <dbReference type="ChEBI" id="CHEBI:59871"/>
        <dbReference type="ChEBI" id="CHEBI:78442"/>
        <dbReference type="ChEBI" id="CHEBI:79333"/>
        <dbReference type="EC" id="3.1.1.96"/>
    </reaction>
</comment>
<comment type="subunit">
    <text evidence="1">Homodimer.</text>
</comment>
<comment type="subcellular location">
    <subcellularLocation>
        <location evidence="1">Cytoplasm</location>
    </subcellularLocation>
</comment>
<comment type="domain">
    <text evidence="1">A Gly-cisPro motif from one monomer fits into the active site of the other monomer to allow specific chiral rejection of L-amino acids.</text>
</comment>
<comment type="similarity">
    <text evidence="1">Belongs to the DTD family.</text>
</comment>
<proteinExistence type="inferred from homology"/>
<name>DTD_HERA2</name>
<keyword id="KW-0963">Cytoplasm</keyword>
<keyword id="KW-0378">Hydrolase</keyword>
<keyword id="KW-0694">RNA-binding</keyword>
<keyword id="KW-0820">tRNA-binding</keyword>
<dbReference type="EC" id="3.1.1.96" evidence="1"/>
<dbReference type="EMBL" id="CP000875">
    <property type="protein sequence ID" value="ABX02838.1"/>
    <property type="molecule type" value="Genomic_DNA"/>
</dbReference>
<dbReference type="SMR" id="A9B6D5"/>
<dbReference type="FunCoup" id="A9B6D5">
    <property type="interactions" value="412"/>
</dbReference>
<dbReference type="STRING" id="316274.Haur_0186"/>
<dbReference type="KEGG" id="hau:Haur_0186"/>
<dbReference type="eggNOG" id="COG1490">
    <property type="taxonomic scope" value="Bacteria"/>
</dbReference>
<dbReference type="HOGENOM" id="CLU_076901_1_0_0"/>
<dbReference type="InParanoid" id="A9B6D5"/>
<dbReference type="Proteomes" id="UP000000787">
    <property type="component" value="Chromosome"/>
</dbReference>
<dbReference type="GO" id="GO:0005737">
    <property type="term" value="C:cytoplasm"/>
    <property type="evidence" value="ECO:0007669"/>
    <property type="project" value="UniProtKB-SubCell"/>
</dbReference>
<dbReference type="GO" id="GO:0051500">
    <property type="term" value="F:D-tyrosyl-tRNA(Tyr) deacylase activity"/>
    <property type="evidence" value="ECO:0007669"/>
    <property type="project" value="TreeGrafter"/>
</dbReference>
<dbReference type="GO" id="GO:0106026">
    <property type="term" value="F:Gly-tRNA(Ala) deacylase activity"/>
    <property type="evidence" value="ECO:0007669"/>
    <property type="project" value="UniProtKB-UniRule"/>
</dbReference>
<dbReference type="GO" id="GO:0043908">
    <property type="term" value="F:Ser(Gly)-tRNA(Ala) hydrolase activity"/>
    <property type="evidence" value="ECO:0007669"/>
    <property type="project" value="UniProtKB-UniRule"/>
</dbReference>
<dbReference type="GO" id="GO:0000049">
    <property type="term" value="F:tRNA binding"/>
    <property type="evidence" value="ECO:0007669"/>
    <property type="project" value="UniProtKB-UniRule"/>
</dbReference>
<dbReference type="GO" id="GO:0019478">
    <property type="term" value="P:D-amino acid catabolic process"/>
    <property type="evidence" value="ECO:0007669"/>
    <property type="project" value="UniProtKB-UniRule"/>
</dbReference>
<dbReference type="CDD" id="cd00563">
    <property type="entry name" value="Dtyr_deacylase"/>
    <property type="match status" value="1"/>
</dbReference>
<dbReference type="FunFam" id="3.50.80.10:FF:000001">
    <property type="entry name" value="D-aminoacyl-tRNA deacylase"/>
    <property type="match status" value="1"/>
</dbReference>
<dbReference type="Gene3D" id="3.50.80.10">
    <property type="entry name" value="D-tyrosyl-tRNA(Tyr) deacylase"/>
    <property type="match status" value="1"/>
</dbReference>
<dbReference type="HAMAP" id="MF_00518">
    <property type="entry name" value="Deacylase_Dtd"/>
    <property type="match status" value="1"/>
</dbReference>
<dbReference type="InterPro" id="IPR003732">
    <property type="entry name" value="Daa-tRNA_deacyls_DTD"/>
</dbReference>
<dbReference type="InterPro" id="IPR023509">
    <property type="entry name" value="DTD-like_sf"/>
</dbReference>
<dbReference type="NCBIfam" id="TIGR00256">
    <property type="entry name" value="D-aminoacyl-tRNA deacylase"/>
    <property type="match status" value="1"/>
</dbReference>
<dbReference type="PANTHER" id="PTHR10472:SF5">
    <property type="entry name" value="D-AMINOACYL-TRNA DEACYLASE 1"/>
    <property type="match status" value="1"/>
</dbReference>
<dbReference type="PANTHER" id="PTHR10472">
    <property type="entry name" value="D-TYROSYL-TRNA TYR DEACYLASE"/>
    <property type="match status" value="1"/>
</dbReference>
<dbReference type="Pfam" id="PF02580">
    <property type="entry name" value="Tyr_Deacylase"/>
    <property type="match status" value="1"/>
</dbReference>
<dbReference type="SUPFAM" id="SSF69500">
    <property type="entry name" value="DTD-like"/>
    <property type="match status" value="1"/>
</dbReference>
<organism>
    <name type="scientific">Herpetosiphon aurantiacus (strain ATCC 23779 / DSM 785 / 114-95)</name>
    <dbReference type="NCBI Taxonomy" id="316274"/>
    <lineage>
        <taxon>Bacteria</taxon>
        <taxon>Bacillati</taxon>
        <taxon>Chloroflexota</taxon>
        <taxon>Chloroflexia</taxon>
        <taxon>Herpetosiphonales</taxon>
        <taxon>Herpetosiphonaceae</taxon>
        <taxon>Herpetosiphon</taxon>
    </lineage>
</organism>
<protein>
    <recommendedName>
        <fullName evidence="1">D-aminoacyl-tRNA deacylase</fullName>
        <shortName evidence="1">DTD</shortName>
        <ecNumber evidence="1">3.1.1.96</ecNumber>
    </recommendedName>
    <alternativeName>
        <fullName evidence="1">Gly-tRNA(Ala) deacylase</fullName>
    </alternativeName>
</protein>
<accession>A9B6D5</accession>